<evidence type="ECO:0000255" key="1">
    <source>
        <dbReference type="HAMAP-Rule" id="MF_00061"/>
    </source>
</evidence>
<proteinExistence type="inferred from homology"/>
<accession>Q6D554</accession>
<sequence length="290" mass="32211">MQPTVIETWPAPAKLNLFLYITGQRQDGYHLLQTLFQFLDYGDTLTIRPRNDDQINLLTPIDGVENEQNLIIRAARLLQQHCERRNIRPAQFGANIHIEKCLPMGGGLGGGSSNAATVLVALNHLWQSGLNVDTLAELGLQLGADVPVFIRGYAAFAEGIGEQLTPANPPEKWYLVAHPSISIATPLIFGDPELTRNSPVRDLETLLNQTFVNDCEAIARKRFREVEQLLSWLLEYAPARLTGTGACVFAEFDTEFAARQVLDQAPEWLNGFVARGVNVSPLQRRLSGQR</sequence>
<protein>
    <recommendedName>
        <fullName evidence="1">4-diphosphocytidyl-2-C-methyl-D-erythritol kinase</fullName>
        <shortName evidence="1">CMK</shortName>
        <ecNumber evidence="1">2.7.1.148</ecNumber>
    </recommendedName>
    <alternativeName>
        <fullName evidence="1">4-(cytidine-5'-diphospho)-2-C-methyl-D-erythritol kinase</fullName>
    </alternativeName>
</protein>
<reference key="1">
    <citation type="journal article" date="2004" name="Proc. Natl. Acad. Sci. U.S.A.">
        <title>Genome sequence of the enterobacterial phytopathogen Erwinia carotovora subsp. atroseptica and characterization of virulence factors.</title>
        <authorList>
            <person name="Bell K.S."/>
            <person name="Sebaihia M."/>
            <person name="Pritchard L."/>
            <person name="Holden M.T.G."/>
            <person name="Hyman L.J."/>
            <person name="Holeva M.C."/>
            <person name="Thomson N.R."/>
            <person name="Bentley S.D."/>
            <person name="Churcher L.J.C."/>
            <person name="Mungall K."/>
            <person name="Atkin R."/>
            <person name="Bason N."/>
            <person name="Brooks K."/>
            <person name="Chillingworth T."/>
            <person name="Clark K."/>
            <person name="Doggett J."/>
            <person name="Fraser A."/>
            <person name="Hance Z."/>
            <person name="Hauser H."/>
            <person name="Jagels K."/>
            <person name="Moule S."/>
            <person name="Norbertczak H."/>
            <person name="Ormond D."/>
            <person name="Price C."/>
            <person name="Quail M.A."/>
            <person name="Sanders M."/>
            <person name="Walker D."/>
            <person name="Whitehead S."/>
            <person name="Salmond G.P.C."/>
            <person name="Birch P.R.J."/>
            <person name="Parkhill J."/>
            <person name="Toth I.K."/>
        </authorList>
    </citation>
    <scope>NUCLEOTIDE SEQUENCE [LARGE SCALE GENOMIC DNA]</scope>
    <source>
        <strain>SCRI 1043 / ATCC BAA-672</strain>
    </source>
</reference>
<organism>
    <name type="scientific">Pectobacterium atrosepticum (strain SCRI 1043 / ATCC BAA-672)</name>
    <name type="common">Erwinia carotovora subsp. atroseptica</name>
    <dbReference type="NCBI Taxonomy" id="218491"/>
    <lineage>
        <taxon>Bacteria</taxon>
        <taxon>Pseudomonadati</taxon>
        <taxon>Pseudomonadota</taxon>
        <taxon>Gammaproteobacteria</taxon>
        <taxon>Enterobacterales</taxon>
        <taxon>Pectobacteriaceae</taxon>
        <taxon>Pectobacterium</taxon>
    </lineage>
</organism>
<keyword id="KW-0067">ATP-binding</keyword>
<keyword id="KW-0414">Isoprene biosynthesis</keyword>
<keyword id="KW-0418">Kinase</keyword>
<keyword id="KW-0547">Nucleotide-binding</keyword>
<keyword id="KW-1185">Reference proteome</keyword>
<keyword id="KW-0808">Transferase</keyword>
<comment type="function">
    <text evidence="1">Catalyzes the phosphorylation of the position 2 hydroxy group of 4-diphosphocytidyl-2C-methyl-D-erythritol.</text>
</comment>
<comment type="catalytic activity">
    <reaction evidence="1">
        <text>4-CDP-2-C-methyl-D-erythritol + ATP = 4-CDP-2-C-methyl-D-erythritol 2-phosphate + ADP + H(+)</text>
        <dbReference type="Rhea" id="RHEA:18437"/>
        <dbReference type="ChEBI" id="CHEBI:15378"/>
        <dbReference type="ChEBI" id="CHEBI:30616"/>
        <dbReference type="ChEBI" id="CHEBI:57823"/>
        <dbReference type="ChEBI" id="CHEBI:57919"/>
        <dbReference type="ChEBI" id="CHEBI:456216"/>
        <dbReference type="EC" id="2.7.1.148"/>
    </reaction>
</comment>
<comment type="pathway">
    <text evidence="1">Isoprenoid biosynthesis; isopentenyl diphosphate biosynthesis via DXP pathway; isopentenyl diphosphate from 1-deoxy-D-xylulose 5-phosphate: step 3/6.</text>
</comment>
<comment type="subunit">
    <text evidence="1">Homodimer.</text>
</comment>
<comment type="similarity">
    <text evidence="1">Belongs to the GHMP kinase family. IspE subfamily.</text>
</comment>
<name>ISPE_PECAS</name>
<feature type="chain" id="PRO_0000235092" description="4-diphosphocytidyl-2-C-methyl-D-erythritol kinase">
    <location>
        <begin position="1"/>
        <end position="290"/>
    </location>
</feature>
<feature type="active site" evidence="1">
    <location>
        <position position="14"/>
    </location>
</feature>
<feature type="active site" evidence="1">
    <location>
        <position position="145"/>
    </location>
</feature>
<feature type="binding site" evidence="1">
    <location>
        <begin position="103"/>
        <end position="113"/>
    </location>
    <ligand>
        <name>ATP</name>
        <dbReference type="ChEBI" id="CHEBI:30616"/>
    </ligand>
</feature>
<dbReference type="EC" id="2.7.1.148" evidence="1"/>
<dbReference type="EMBL" id="BX950851">
    <property type="protein sequence ID" value="CAG75089.1"/>
    <property type="molecule type" value="Genomic_DNA"/>
</dbReference>
<dbReference type="RefSeq" id="WP_011093746.1">
    <property type="nucleotide sequence ID" value="NC_004547.2"/>
</dbReference>
<dbReference type="SMR" id="Q6D554"/>
<dbReference type="STRING" id="218491.ECA2187"/>
<dbReference type="GeneID" id="57209091"/>
<dbReference type="KEGG" id="eca:ECA2187"/>
<dbReference type="PATRIC" id="fig|218491.5.peg.2220"/>
<dbReference type="eggNOG" id="COG1947">
    <property type="taxonomic scope" value="Bacteria"/>
</dbReference>
<dbReference type="HOGENOM" id="CLU_053057_3_0_6"/>
<dbReference type="OrthoDB" id="9809438at2"/>
<dbReference type="UniPathway" id="UPA00056">
    <property type="reaction ID" value="UER00094"/>
</dbReference>
<dbReference type="Proteomes" id="UP000007966">
    <property type="component" value="Chromosome"/>
</dbReference>
<dbReference type="GO" id="GO:0050515">
    <property type="term" value="F:4-(cytidine 5'-diphospho)-2-C-methyl-D-erythritol kinase activity"/>
    <property type="evidence" value="ECO:0007669"/>
    <property type="project" value="UniProtKB-UniRule"/>
</dbReference>
<dbReference type="GO" id="GO:0005524">
    <property type="term" value="F:ATP binding"/>
    <property type="evidence" value="ECO:0007669"/>
    <property type="project" value="UniProtKB-UniRule"/>
</dbReference>
<dbReference type="GO" id="GO:0019288">
    <property type="term" value="P:isopentenyl diphosphate biosynthetic process, methylerythritol 4-phosphate pathway"/>
    <property type="evidence" value="ECO:0007669"/>
    <property type="project" value="UniProtKB-UniRule"/>
</dbReference>
<dbReference type="GO" id="GO:0016114">
    <property type="term" value="P:terpenoid biosynthetic process"/>
    <property type="evidence" value="ECO:0007669"/>
    <property type="project" value="InterPro"/>
</dbReference>
<dbReference type="FunFam" id="3.30.230.10:FF:000022">
    <property type="entry name" value="4-diphosphocytidyl-2-C-methyl-D-erythritol kinase"/>
    <property type="match status" value="1"/>
</dbReference>
<dbReference type="FunFam" id="3.30.70.890:FF:000004">
    <property type="entry name" value="4-diphosphocytidyl-2-C-methyl-D-erythritol kinase"/>
    <property type="match status" value="1"/>
</dbReference>
<dbReference type="Gene3D" id="3.30.230.10">
    <property type="match status" value="1"/>
</dbReference>
<dbReference type="Gene3D" id="3.30.70.890">
    <property type="entry name" value="GHMP kinase, C-terminal domain"/>
    <property type="match status" value="1"/>
</dbReference>
<dbReference type="HAMAP" id="MF_00061">
    <property type="entry name" value="IspE"/>
    <property type="match status" value="1"/>
</dbReference>
<dbReference type="InterPro" id="IPR013750">
    <property type="entry name" value="GHMP_kinase_C_dom"/>
</dbReference>
<dbReference type="InterPro" id="IPR036554">
    <property type="entry name" value="GHMP_kinase_C_sf"/>
</dbReference>
<dbReference type="InterPro" id="IPR006204">
    <property type="entry name" value="GHMP_kinase_N_dom"/>
</dbReference>
<dbReference type="InterPro" id="IPR004424">
    <property type="entry name" value="IspE"/>
</dbReference>
<dbReference type="InterPro" id="IPR020568">
    <property type="entry name" value="Ribosomal_Su5_D2-typ_SF"/>
</dbReference>
<dbReference type="InterPro" id="IPR014721">
    <property type="entry name" value="Ribsml_uS5_D2-typ_fold_subgr"/>
</dbReference>
<dbReference type="NCBIfam" id="TIGR00154">
    <property type="entry name" value="ispE"/>
    <property type="match status" value="1"/>
</dbReference>
<dbReference type="PANTHER" id="PTHR43527">
    <property type="entry name" value="4-DIPHOSPHOCYTIDYL-2-C-METHYL-D-ERYTHRITOL KINASE, CHLOROPLASTIC"/>
    <property type="match status" value="1"/>
</dbReference>
<dbReference type="PANTHER" id="PTHR43527:SF2">
    <property type="entry name" value="4-DIPHOSPHOCYTIDYL-2-C-METHYL-D-ERYTHRITOL KINASE, CHLOROPLASTIC"/>
    <property type="match status" value="1"/>
</dbReference>
<dbReference type="Pfam" id="PF08544">
    <property type="entry name" value="GHMP_kinases_C"/>
    <property type="match status" value="1"/>
</dbReference>
<dbReference type="Pfam" id="PF00288">
    <property type="entry name" value="GHMP_kinases_N"/>
    <property type="match status" value="1"/>
</dbReference>
<dbReference type="PIRSF" id="PIRSF010376">
    <property type="entry name" value="IspE"/>
    <property type="match status" value="1"/>
</dbReference>
<dbReference type="SUPFAM" id="SSF55060">
    <property type="entry name" value="GHMP Kinase, C-terminal domain"/>
    <property type="match status" value="1"/>
</dbReference>
<dbReference type="SUPFAM" id="SSF54211">
    <property type="entry name" value="Ribosomal protein S5 domain 2-like"/>
    <property type="match status" value="1"/>
</dbReference>
<gene>
    <name evidence="1" type="primary">ispE</name>
    <name type="ordered locus">ECA2187</name>
</gene>